<dbReference type="EMBL" id="X03001">
    <property type="protein sequence ID" value="CAA26778.1"/>
    <property type="status" value="ALT_SEQ"/>
    <property type="molecule type" value="Genomic_DNA"/>
</dbReference>
<dbReference type="PIR" id="A03829">
    <property type="entry name" value="ERADTA"/>
</dbReference>
<dbReference type="GO" id="GO:0006355">
    <property type="term" value="P:regulation of DNA-templated transcription"/>
    <property type="evidence" value="ECO:0007669"/>
    <property type="project" value="InterPro"/>
</dbReference>
<dbReference type="GO" id="GO:0044003">
    <property type="term" value="P:symbiont-mediated perturbation of host process"/>
    <property type="evidence" value="ECO:0007669"/>
    <property type="project" value="InterPro"/>
</dbReference>
<dbReference type="InterPro" id="IPR014410">
    <property type="entry name" value="Aden_E1A"/>
</dbReference>
<dbReference type="Pfam" id="PF02703">
    <property type="entry name" value="Adeno_E1A"/>
    <property type="match status" value="1"/>
</dbReference>
<keyword id="KW-0244">Early protein</keyword>
<organism>
    <name type="scientific">Tree shrew adenovirus serotype 1</name>
    <name type="common">TSAdV-1</name>
    <name type="synonym">Tupaia adenovirus 1</name>
    <dbReference type="NCBI Taxonomy" id="47680"/>
    <lineage>
        <taxon>Viruses</taxon>
        <taxon>Varidnaviria</taxon>
        <taxon>Bamfordvirae</taxon>
        <taxon>Preplasmiviricota</taxon>
        <taxon>Tectiliviricetes</taxon>
        <taxon>Rowavirales</taxon>
        <taxon>Adenoviridae</taxon>
        <taxon>Mastadenovirus</taxon>
        <taxon>Tree shrew mastadenovirus A</taxon>
    </lineage>
</organism>
<reference key="1">
    <citation type="journal article" date="1983" name="EMBO J.">
        <title>Tupaia (tree shrew) adenovirus DNA: sequence of the left-hand fragment corresponding to the transforming early region of human adenoviruses.</title>
        <authorList>
            <person name="Brinckmann U."/>
            <person name="Darai G."/>
            <person name="Flugel R.M."/>
        </authorList>
    </citation>
    <scope>NUCLEOTIDE SEQUENCE [GENOMIC DNA]</scope>
</reference>
<accession>P06439</accession>
<accession>P04887</accession>
<proteinExistence type="predicted"/>
<protein>
    <recommendedName>
        <fullName>Early E1A 18 kDa protein</fullName>
    </recommendedName>
</protein>
<name>E118_ADET1</name>
<feature type="chain" id="PRO_0000221690" description="Early E1A 18 kDa protein">
    <location>
        <begin position="1"/>
        <end position="162"/>
    </location>
</feature>
<feature type="region of interest" description="Disordered" evidence="1">
    <location>
        <begin position="134"/>
        <end position="162"/>
    </location>
</feature>
<feature type="compositionally biased region" description="Polar residues" evidence="1">
    <location>
        <begin position="150"/>
        <end position="162"/>
    </location>
</feature>
<sequence length="162" mass="17824">MRNWELSVSPSFLELCDQYVSLCESPSFSGPSCLNDMAPDDILGNCDLFAEAADALFPDCLLEEVEAASGLAFETNEEVEGFVFPDCPERPGQECRSCKQHREMSGDPSILCSLCYMRLTACFVYSPVSDVEDEEPTEGVAENSLKRQADSSLCSSSPKRFC</sequence>
<evidence type="ECO:0000256" key="1">
    <source>
        <dbReference type="SAM" id="MobiDB-lite"/>
    </source>
</evidence>
<organismHost>
    <name type="scientific">Tupaiidae</name>
    <name type="common">tree shrews</name>
    <dbReference type="NCBI Taxonomy" id="9393"/>
</organismHost>